<dbReference type="EMBL" id="AAFI02000019">
    <property type="protein sequence ID" value="EAL68777.1"/>
    <property type="molecule type" value="Genomic_DNA"/>
</dbReference>
<dbReference type="EMBL" id="AAFI02000019">
    <property type="protein sequence ID" value="EAL68933.1"/>
    <property type="molecule type" value="Genomic_DNA"/>
</dbReference>
<dbReference type="RefSeq" id="XP_642712.1">
    <property type="nucleotide sequence ID" value="XM_637620.1"/>
</dbReference>
<dbReference type="RefSeq" id="XP_642958.1">
    <property type="nucleotide sequence ID" value="XM_637866.1"/>
</dbReference>
<dbReference type="SMR" id="Q76NW2"/>
<dbReference type="FunCoup" id="Q76NW2">
    <property type="interactions" value="358"/>
</dbReference>
<dbReference type="STRING" id="44689.Q76NW2"/>
<dbReference type="iPTMnet" id="Q76NW2"/>
<dbReference type="PaxDb" id="44689-DDB0216310"/>
<dbReference type="EnsemblProtists" id="EAL68777">
    <property type="protein sequence ID" value="EAL68777"/>
    <property type="gene ID" value="DDB_G0277183"/>
</dbReference>
<dbReference type="EnsemblProtists" id="EAL68933">
    <property type="protein sequence ID" value="EAL68933"/>
    <property type="gene ID" value="DDB_G0276863"/>
</dbReference>
<dbReference type="GeneID" id="8620827"/>
<dbReference type="GeneID" id="8620904"/>
<dbReference type="KEGG" id="ddi:DDB_G0276863"/>
<dbReference type="KEGG" id="ddi:DDB_G0277183"/>
<dbReference type="dictyBase" id="DDB_G0277183">
    <property type="gene designation" value="H4a"/>
</dbReference>
<dbReference type="dictyBase" id="DDB_G0276863">
    <property type="gene designation" value="H4b"/>
</dbReference>
<dbReference type="VEuPathDB" id="AmoebaDB:DDB_G0276863"/>
<dbReference type="eggNOG" id="KOG3467">
    <property type="taxonomic scope" value="Eukaryota"/>
</dbReference>
<dbReference type="HOGENOM" id="CLU_109117_2_3_1"/>
<dbReference type="InParanoid" id="Q76NW2"/>
<dbReference type="OMA" id="QKEHING"/>
<dbReference type="PhylomeDB" id="Q76NW2"/>
<dbReference type="Reactome" id="R-DDI-2299718">
    <property type="pathway name" value="Condensation of Prophase Chromosomes"/>
</dbReference>
<dbReference type="Reactome" id="R-DDI-2559580">
    <property type="pathway name" value="Oxidative Stress Induced Senescence"/>
</dbReference>
<dbReference type="Reactome" id="R-DDI-3214815">
    <property type="pathway name" value="HDACs deacetylate histones"/>
</dbReference>
<dbReference type="Reactome" id="R-DDI-3214847">
    <property type="pathway name" value="HATs acetylate histones"/>
</dbReference>
<dbReference type="Reactome" id="R-DDI-3214858">
    <property type="pathway name" value="RMTs methylate histone arginines"/>
</dbReference>
<dbReference type="Reactome" id="R-DDI-427359">
    <property type="pathway name" value="SIRT1 negatively regulates rRNA expression"/>
</dbReference>
<dbReference type="Reactome" id="R-DDI-4551638">
    <property type="pathway name" value="SUMOylation of chromatin organization proteins"/>
</dbReference>
<dbReference type="Reactome" id="R-DDI-5625886">
    <property type="pathway name" value="Activated PKN1 stimulates transcription of AR (androgen receptor) regulated genes KLK2 and KLK3"/>
</dbReference>
<dbReference type="Reactome" id="R-DDI-5693565">
    <property type="pathway name" value="Recruitment and ATM-mediated phosphorylation of repair and signaling proteins at DNA double strand breaks"/>
</dbReference>
<dbReference type="Reactome" id="R-DDI-68616">
    <property type="pathway name" value="Assembly of the ORC complex at the origin of replication"/>
</dbReference>
<dbReference type="Reactome" id="R-DDI-73772">
    <property type="pathway name" value="RNA Polymerase I Promoter Escape"/>
</dbReference>
<dbReference type="Reactome" id="R-DDI-9843940">
    <property type="pathway name" value="Regulation of endogenous retroelements by KRAB-ZFP proteins"/>
</dbReference>
<dbReference type="PRO" id="PR:Q76NW2"/>
<dbReference type="Proteomes" id="UP000002195">
    <property type="component" value="Chromosome 2"/>
</dbReference>
<dbReference type="GO" id="GO:0031012">
    <property type="term" value="C:extracellular matrix"/>
    <property type="evidence" value="ECO:0007005"/>
    <property type="project" value="dictyBase"/>
</dbReference>
<dbReference type="GO" id="GO:0000786">
    <property type="term" value="C:nucleosome"/>
    <property type="evidence" value="ECO:0000305"/>
    <property type="project" value="dictyBase"/>
</dbReference>
<dbReference type="GO" id="GO:0005634">
    <property type="term" value="C:nucleus"/>
    <property type="evidence" value="ECO:0007669"/>
    <property type="project" value="UniProtKB-SubCell"/>
</dbReference>
<dbReference type="GO" id="GO:0003677">
    <property type="term" value="F:DNA binding"/>
    <property type="evidence" value="ECO:0000318"/>
    <property type="project" value="GO_Central"/>
</dbReference>
<dbReference type="GO" id="GO:0046982">
    <property type="term" value="F:protein heterodimerization activity"/>
    <property type="evidence" value="ECO:0007669"/>
    <property type="project" value="InterPro"/>
</dbReference>
<dbReference type="GO" id="GO:0030527">
    <property type="term" value="F:structural constituent of chromatin"/>
    <property type="evidence" value="ECO:0000314"/>
    <property type="project" value="dictyBase"/>
</dbReference>
<dbReference type="GO" id="GO:0006338">
    <property type="term" value="P:chromatin remodeling"/>
    <property type="evidence" value="ECO:0000314"/>
    <property type="project" value="dictyBase"/>
</dbReference>
<dbReference type="GO" id="GO:0006334">
    <property type="term" value="P:nucleosome assembly"/>
    <property type="evidence" value="ECO:0000318"/>
    <property type="project" value="GO_Central"/>
</dbReference>
<dbReference type="GO" id="GO:0046689">
    <property type="term" value="P:response to mercury ion"/>
    <property type="evidence" value="ECO:0000314"/>
    <property type="project" value="dictyBase"/>
</dbReference>
<dbReference type="CDD" id="cd22912">
    <property type="entry name" value="HFD_H4"/>
    <property type="match status" value="1"/>
</dbReference>
<dbReference type="FunFam" id="1.10.20.10:FF:000012">
    <property type="entry name" value="Histone H4"/>
    <property type="match status" value="1"/>
</dbReference>
<dbReference type="Gene3D" id="1.10.20.10">
    <property type="entry name" value="Histone, subunit A"/>
    <property type="match status" value="1"/>
</dbReference>
<dbReference type="InterPro" id="IPR035425">
    <property type="entry name" value="CENP-T/H4_C"/>
</dbReference>
<dbReference type="InterPro" id="IPR009072">
    <property type="entry name" value="Histone-fold"/>
</dbReference>
<dbReference type="InterPro" id="IPR001951">
    <property type="entry name" value="Histone_H4"/>
</dbReference>
<dbReference type="InterPro" id="IPR019809">
    <property type="entry name" value="Histone_H4_CS"/>
</dbReference>
<dbReference type="PANTHER" id="PTHR10484">
    <property type="entry name" value="HISTONE H4"/>
    <property type="match status" value="1"/>
</dbReference>
<dbReference type="Pfam" id="PF15511">
    <property type="entry name" value="CENP-T_C"/>
    <property type="match status" value="1"/>
</dbReference>
<dbReference type="PRINTS" id="PR00623">
    <property type="entry name" value="HISTONEH4"/>
</dbReference>
<dbReference type="SMART" id="SM00417">
    <property type="entry name" value="H4"/>
    <property type="match status" value="1"/>
</dbReference>
<dbReference type="SUPFAM" id="SSF47113">
    <property type="entry name" value="Histone-fold"/>
    <property type="match status" value="1"/>
</dbReference>
<dbReference type="PROSITE" id="PS00047">
    <property type="entry name" value="HISTONE_H4"/>
    <property type="match status" value="1"/>
</dbReference>
<feature type="chain" id="PRO_0000315891" description="Histone H4">
    <location>
        <begin position="1"/>
        <end position="108"/>
    </location>
</feature>
<feature type="region of interest" description="Disordered" evidence="1">
    <location>
        <begin position="1"/>
        <end position="36"/>
    </location>
</feature>
<feature type="compositionally biased region" description="Gly residues" evidence="1">
    <location>
        <begin position="9"/>
        <end position="19"/>
    </location>
</feature>
<protein>
    <recommendedName>
        <fullName>Histone H4</fullName>
    </recommendedName>
</protein>
<gene>
    <name type="primary">H4a</name>
    <name type="ORF">DDB_G0277183</name>
</gene>
<gene>
    <name type="primary">H4b</name>
    <name type="ORF">DDB_G0276863</name>
</gene>
<organism>
    <name type="scientific">Dictyostelium discoideum</name>
    <name type="common">Social amoeba</name>
    <dbReference type="NCBI Taxonomy" id="44689"/>
    <lineage>
        <taxon>Eukaryota</taxon>
        <taxon>Amoebozoa</taxon>
        <taxon>Evosea</taxon>
        <taxon>Eumycetozoa</taxon>
        <taxon>Dictyostelia</taxon>
        <taxon>Dictyosteliales</taxon>
        <taxon>Dictyosteliaceae</taxon>
        <taxon>Dictyostelium</taxon>
    </lineage>
</organism>
<keyword id="KW-0158">Chromosome</keyword>
<keyword id="KW-0238">DNA-binding</keyword>
<keyword id="KW-0544">Nucleosome core</keyword>
<keyword id="KW-0539">Nucleus</keyword>
<keyword id="KW-1185">Reference proteome</keyword>
<reference key="1">
    <citation type="journal article" date="2002" name="Nature">
        <title>Sequence and analysis of chromosome 2 of Dictyostelium discoideum.</title>
        <authorList>
            <person name="Gloeckner G."/>
            <person name="Eichinger L."/>
            <person name="Szafranski K."/>
            <person name="Pachebat J.A."/>
            <person name="Bankier A.T."/>
            <person name="Dear P.H."/>
            <person name="Lehmann R."/>
            <person name="Baumgart C."/>
            <person name="Parra G."/>
            <person name="Abril J.F."/>
            <person name="Guigo R."/>
            <person name="Kumpf K."/>
            <person name="Tunggal B."/>
            <person name="Cox E.C."/>
            <person name="Quail M.A."/>
            <person name="Platzer M."/>
            <person name="Rosenthal A."/>
            <person name="Noegel A.A."/>
        </authorList>
    </citation>
    <scope>NUCLEOTIDE SEQUENCE [LARGE SCALE GENOMIC DNA]</scope>
    <source>
        <strain>AX4</strain>
    </source>
</reference>
<reference key="2">
    <citation type="journal article" date="2005" name="Nature">
        <title>The genome of the social amoeba Dictyostelium discoideum.</title>
        <authorList>
            <person name="Eichinger L."/>
            <person name="Pachebat J.A."/>
            <person name="Gloeckner G."/>
            <person name="Rajandream M.A."/>
            <person name="Sucgang R."/>
            <person name="Berriman M."/>
            <person name="Song J."/>
            <person name="Olsen R."/>
            <person name="Szafranski K."/>
            <person name="Xu Q."/>
            <person name="Tunggal B."/>
            <person name="Kummerfeld S."/>
            <person name="Madera M."/>
            <person name="Konfortov B.A."/>
            <person name="Rivero F."/>
            <person name="Bankier A.T."/>
            <person name="Lehmann R."/>
            <person name="Hamlin N."/>
            <person name="Davies R."/>
            <person name="Gaudet P."/>
            <person name="Fey P."/>
            <person name="Pilcher K."/>
            <person name="Chen G."/>
            <person name="Saunders D."/>
            <person name="Sodergren E.J."/>
            <person name="Davis P."/>
            <person name="Kerhornou A."/>
            <person name="Nie X."/>
            <person name="Hall N."/>
            <person name="Anjard C."/>
            <person name="Hemphill L."/>
            <person name="Bason N."/>
            <person name="Farbrother P."/>
            <person name="Desany B."/>
            <person name="Just E."/>
            <person name="Morio T."/>
            <person name="Rost R."/>
            <person name="Churcher C.M."/>
            <person name="Cooper J."/>
            <person name="Haydock S."/>
            <person name="van Driessche N."/>
            <person name="Cronin A."/>
            <person name="Goodhead I."/>
            <person name="Muzny D.M."/>
            <person name="Mourier T."/>
            <person name="Pain A."/>
            <person name="Lu M."/>
            <person name="Harper D."/>
            <person name="Lindsay R."/>
            <person name="Hauser H."/>
            <person name="James K.D."/>
            <person name="Quiles M."/>
            <person name="Madan Babu M."/>
            <person name="Saito T."/>
            <person name="Buchrieser C."/>
            <person name="Wardroper A."/>
            <person name="Felder M."/>
            <person name="Thangavelu M."/>
            <person name="Johnson D."/>
            <person name="Knights A."/>
            <person name="Loulseged H."/>
            <person name="Mungall K.L."/>
            <person name="Oliver K."/>
            <person name="Price C."/>
            <person name="Quail M.A."/>
            <person name="Urushihara H."/>
            <person name="Hernandez J."/>
            <person name="Rabbinowitsch E."/>
            <person name="Steffen D."/>
            <person name="Sanders M."/>
            <person name="Ma J."/>
            <person name="Kohara Y."/>
            <person name="Sharp S."/>
            <person name="Simmonds M.N."/>
            <person name="Spiegler S."/>
            <person name="Tivey A."/>
            <person name="Sugano S."/>
            <person name="White B."/>
            <person name="Walker D."/>
            <person name="Woodward J.R."/>
            <person name="Winckler T."/>
            <person name="Tanaka Y."/>
            <person name="Shaulsky G."/>
            <person name="Schleicher M."/>
            <person name="Weinstock G.M."/>
            <person name="Rosenthal A."/>
            <person name="Cox E.C."/>
            <person name="Chisholm R.L."/>
            <person name="Gibbs R.A."/>
            <person name="Loomis W.F."/>
            <person name="Platzer M."/>
            <person name="Kay R.R."/>
            <person name="Williams J.G."/>
            <person name="Dear P.H."/>
            <person name="Noegel A.A."/>
            <person name="Barrell B.G."/>
            <person name="Kuspa A."/>
        </authorList>
    </citation>
    <scope>NUCLEOTIDE SEQUENCE [LARGE SCALE GENOMIC DNA]</scope>
    <source>
        <strain>AX4</strain>
    </source>
</reference>
<reference key="3">
    <citation type="journal article" date="1979" name="Biochemistry">
        <title>Purification and the histones of Dictyostelium discoideum chromatin.</title>
        <authorList>
            <person name="Bakke A.C."/>
            <person name="Bonner J."/>
        </authorList>
    </citation>
    <scope>PURIFICATION</scope>
    <scope>AMINO-ACID COMPOSITION</scope>
</reference>
<proteinExistence type="evidence at protein level"/>
<sequence length="108" mass="12017">MSSAQSRGGKTGGKVGGKVGAKRHKKTQKEHINGITKPAIRRLARRGGVKRISFPIYEETRNVLRTFLTNVIRDSVAYTEHAGRRTVTAMDVVYALKRQGRTLYGFNS</sequence>
<accession>Q76NW2</accession>
<accession>Q550A4</accession>
<name>H4_DICDI</name>
<comment type="function">
    <text>Core component of nucleosome. Nucleosomes wrap and compact DNA into chromatin, limiting DNA accessibility to the cellular machineries which require DNA as a template. Histones thereby play a central role in transcription regulation, DNA repair, DNA replication and chromosomal stability. DNA accessibility is regulated via a complex set of post-translational modifications of histones, also called histone code, and nucleosome remodeling.</text>
</comment>
<comment type="subunit">
    <text>The nucleosome is a histone octamer containing two molecules each of H2A, H2B, H3 and H4 assembled in one H3-H4 heterotetramer and two H2A-H2B heterodimers. The octamer wraps approximately 147 bp of DNA.</text>
</comment>
<comment type="subcellular location">
    <subcellularLocation>
        <location>Nucleus</location>
    </subcellularLocation>
    <subcellularLocation>
        <location>Chromosome</location>
    </subcellularLocation>
</comment>
<comment type="similarity">
    <text evidence="2">Belongs to the histone H4 family.</text>
</comment>
<evidence type="ECO:0000256" key="1">
    <source>
        <dbReference type="SAM" id="MobiDB-lite"/>
    </source>
</evidence>
<evidence type="ECO:0000305" key="2"/>